<proteinExistence type="evidence at transcript level"/>
<dbReference type="EMBL" id="AY224468">
    <property type="protein sequence ID" value="AAO72587.1"/>
    <property type="molecule type" value="mRNA"/>
</dbReference>
<dbReference type="EMBL" id="DP000009">
    <property type="protein sequence ID" value="ABF94513.1"/>
    <property type="molecule type" value="Genomic_DNA"/>
</dbReference>
<dbReference type="EMBL" id="DP000009">
    <property type="protein sequence ID" value="ABF94514.1"/>
    <property type="status" value="ALT_SEQ"/>
    <property type="molecule type" value="Genomic_DNA"/>
</dbReference>
<dbReference type="EMBL" id="AP008209">
    <property type="protein sequence ID" value="BAF11215.1"/>
    <property type="molecule type" value="Genomic_DNA"/>
</dbReference>
<dbReference type="EMBL" id="AP014959">
    <property type="protein sequence ID" value="BAS82832.1"/>
    <property type="molecule type" value="Genomic_DNA"/>
</dbReference>
<dbReference type="EMBL" id="CM000140">
    <property type="protein sequence ID" value="EEE58526.1"/>
    <property type="molecule type" value="Genomic_DNA"/>
</dbReference>
<dbReference type="EMBL" id="AK121020">
    <property type="protein sequence ID" value="BAH00279.1"/>
    <property type="molecule type" value="mRNA"/>
</dbReference>
<dbReference type="RefSeq" id="XP_015632717.1">
    <property type="nucleotide sequence ID" value="XM_015777231.1"/>
</dbReference>
<dbReference type="SMR" id="Q84P97"/>
<dbReference type="FunCoup" id="Q84P97">
    <property type="interactions" value="2893"/>
</dbReference>
<dbReference type="IntAct" id="Q84P97">
    <property type="interactions" value="1"/>
</dbReference>
<dbReference type="STRING" id="39947.Q84P97"/>
<dbReference type="PaxDb" id="39947-Q84P97"/>
<dbReference type="EnsemblPlants" id="Os03t0202200-01">
    <property type="protein sequence ID" value="Os03t0202200-01"/>
    <property type="gene ID" value="Os03g0202200"/>
</dbReference>
<dbReference type="Gramene" id="Os03t0202200-01">
    <property type="protein sequence ID" value="Os03t0202200-01"/>
    <property type="gene ID" value="Os03g0202200"/>
</dbReference>
<dbReference type="KEGG" id="dosa:Os03g0202200"/>
<dbReference type="eggNOG" id="KOG3126">
    <property type="taxonomic scope" value="Eukaryota"/>
</dbReference>
<dbReference type="HOGENOM" id="CLU_069937_0_0_1"/>
<dbReference type="InParanoid" id="Q84P97"/>
<dbReference type="OMA" id="MAPPCYA"/>
<dbReference type="OrthoDB" id="7827681at2759"/>
<dbReference type="Proteomes" id="UP000000763">
    <property type="component" value="Chromosome 3"/>
</dbReference>
<dbReference type="Proteomes" id="UP000007752">
    <property type="component" value="Chromosome 3"/>
</dbReference>
<dbReference type="Proteomes" id="UP000059680">
    <property type="component" value="Chromosome 3"/>
</dbReference>
<dbReference type="GO" id="GO:0005741">
    <property type="term" value="C:mitochondrial outer membrane"/>
    <property type="evidence" value="ECO:0000318"/>
    <property type="project" value="GO_Central"/>
</dbReference>
<dbReference type="GO" id="GO:0046930">
    <property type="term" value="C:pore complex"/>
    <property type="evidence" value="ECO:0007669"/>
    <property type="project" value="UniProtKB-KW"/>
</dbReference>
<dbReference type="GO" id="GO:0015288">
    <property type="term" value="F:porin activity"/>
    <property type="evidence" value="ECO:0007669"/>
    <property type="project" value="UniProtKB-KW"/>
</dbReference>
<dbReference type="GO" id="GO:0008308">
    <property type="term" value="F:voltage-gated monoatomic anion channel activity"/>
    <property type="evidence" value="ECO:0000318"/>
    <property type="project" value="GO_Central"/>
</dbReference>
<dbReference type="CDD" id="cd07306">
    <property type="entry name" value="Porin3_VDAC"/>
    <property type="match status" value="1"/>
</dbReference>
<dbReference type="FunFam" id="2.40.160.10:FF:000003">
    <property type="entry name" value="Outer mitochondrial membrane protein porin"/>
    <property type="match status" value="1"/>
</dbReference>
<dbReference type="Gene3D" id="2.40.160.10">
    <property type="entry name" value="Porin"/>
    <property type="match status" value="1"/>
</dbReference>
<dbReference type="InterPro" id="IPR023614">
    <property type="entry name" value="Porin_dom_sf"/>
</dbReference>
<dbReference type="InterPro" id="IPR001925">
    <property type="entry name" value="Porin_Euk"/>
</dbReference>
<dbReference type="InterPro" id="IPR027246">
    <property type="entry name" value="Porin_Euk/Tom40"/>
</dbReference>
<dbReference type="PANTHER" id="PTHR11743:SF23">
    <property type="entry name" value="MITOCHONDRIAL OUTER MEMBRANE PROTEIN PORIN 5-RELATED"/>
    <property type="match status" value="1"/>
</dbReference>
<dbReference type="PANTHER" id="PTHR11743">
    <property type="entry name" value="VOLTAGE-DEPENDENT ANION-SELECTIVE CHANNEL"/>
    <property type="match status" value="1"/>
</dbReference>
<dbReference type="Pfam" id="PF01459">
    <property type="entry name" value="Porin_3"/>
    <property type="match status" value="1"/>
</dbReference>
<dbReference type="PROSITE" id="PS00558">
    <property type="entry name" value="EUKARYOTIC_PORIN"/>
    <property type="match status" value="1"/>
</dbReference>
<name>VDAC5_ORYSJ</name>
<sequence length="277" mass="29475">MAMKGPGLFSDIGKRAKDLLTKDYTYDQKLTVSTVSSSGVGLTSTAVKKGGLYTLDVSSVYKYKSTLVDVKVDTESNISTTLTVFDVLPSTKLVTSVKLPDYNSGKVEMQYFHENASFATAVGMKPSPVVEFSGTAGAQGLAFGAEAGFDTATGKFTKYSAAIGVTKPDYHAAIVLADKGDTVKVSGVYHLDDKQKSSVVAELTRRLSTNENTLTVGGLYKVDPETAVKARLNNTGKLAALLQHEVKPKSVLTISGEFDTKALDRPPKFGLALALRP</sequence>
<feature type="initiator methionine" description="Removed" evidence="1">
    <location>
        <position position="1"/>
    </location>
</feature>
<feature type="chain" id="PRO_0000414088" description="Mitochondrial outer membrane protein porin 5">
    <location>
        <begin position="2"/>
        <end position="277"/>
    </location>
</feature>
<organism>
    <name type="scientific">Oryza sativa subsp. japonica</name>
    <name type="common">Rice</name>
    <dbReference type="NCBI Taxonomy" id="39947"/>
    <lineage>
        <taxon>Eukaryota</taxon>
        <taxon>Viridiplantae</taxon>
        <taxon>Streptophyta</taxon>
        <taxon>Embryophyta</taxon>
        <taxon>Tracheophyta</taxon>
        <taxon>Spermatophyta</taxon>
        <taxon>Magnoliopsida</taxon>
        <taxon>Liliopsida</taxon>
        <taxon>Poales</taxon>
        <taxon>Poaceae</taxon>
        <taxon>BOP clade</taxon>
        <taxon>Oryzoideae</taxon>
        <taxon>Oryzeae</taxon>
        <taxon>Oryzinae</taxon>
        <taxon>Oryza</taxon>
        <taxon>Oryza sativa</taxon>
    </lineage>
</organism>
<protein>
    <recommendedName>
        <fullName>Mitochondrial outer membrane protein porin 5</fullName>
    </recommendedName>
    <alternativeName>
        <fullName>Voltage-dependent anion-selective channel protein 5</fullName>
        <shortName>OsVDAC5</shortName>
    </alternativeName>
</protein>
<gene>
    <name type="primary">VDAC5</name>
    <name type="ordered locus">Os03g0202200</name>
    <name type="ordered locus">LOC_Os03g10510</name>
    <name type="ORF">OsJ_09816</name>
</gene>
<reference key="1">
    <citation type="journal article" date="2003" name="Proc. Natl. Acad. Sci. U.S.A.">
        <title>A network of rice genes associated with stress response and seed development.</title>
        <authorList>
            <person name="Cooper B."/>
            <person name="Clarke J.D."/>
            <person name="Budworth P."/>
            <person name="Kreps J."/>
            <person name="Hutchison D."/>
            <person name="Park S."/>
            <person name="Guimil S."/>
            <person name="Dunn M."/>
            <person name="Luginbuehl P."/>
            <person name="Ellero C."/>
            <person name="Goff S.A."/>
            <person name="Glazebrook J."/>
        </authorList>
    </citation>
    <scope>NUCLEOTIDE SEQUENCE [MRNA]</scope>
    <source>
        <strain>cv. Nipponbare</strain>
    </source>
</reference>
<reference key="2">
    <citation type="journal article" date="2005" name="Genome Res.">
        <title>Sequence, annotation, and analysis of synteny between rice chromosome 3 and diverged grass species.</title>
        <authorList>
            <consortium name="The rice chromosome 3 sequencing consortium"/>
            <person name="Buell C.R."/>
            <person name="Yuan Q."/>
            <person name="Ouyang S."/>
            <person name="Liu J."/>
            <person name="Zhu W."/>
            <person name="Wang A."/>
            <person name="Maiti R."/>
            <person name="Haas B."/>
            <person name="Wortman J."/>
            <person name="Pertea M."/>
            <person name="Jones K.M."/>
            <person name="Kim M."/>
            <person name="Overton L."/>
            <person name="Tsitrin T."/>
            <person name="Fadrosh D."/>
            <person name="Bera J."/>
            <person name="Weaver B."/>
            <person name="Jin S."/>
            <person name="Johri S."/>
            <person name="Reardon M."/>
            <person name="Webb K."/>
            <person name="Hill J."/>
            <person name="Moffat K."/>
            <person name="Tallon L."/>
            <person name="Van Aken S."/>
            <person name="Lewis M."/>
            <person name="Utterback T."/>
            <person name="Feldblyum T."/>
            <person name="Zismann V."/>
            <person name="Iobst S."/>
            <person name="Hsiao J."/>
            <person name="de Vazeille A.R."/>
            <person name="Salzberg S.L."/>
            <person name="White O."/>
            <person name="Fraser C.M."/>
            <person name="Yu Y."/>
            <person name="Kim H."/>
            <person name="Rambo T."/>
            <person name="Currie J."/>
            <person name="Collura K."/>
            <person name="Kernodle-Thompson S."/>
            <person name="Wei F."/>
            <person name="Kudrna K."/>
            <person name="Ammiraju J.S.S."/>
            <person name="Luo M."/>
            <person name="Goicoechea J.L."/>
            <person name="Wing R.A."/>
            <person name="Henry D."/>
            <person name="Oates R."/>
            <person name="Palmer M."/>
            <person name="Pries G."/>
            <person name="Saski C."/>
            <person name="Simmons J."/>
            <person name="Soderlund C."/>
            <person name="Nelson W."/>
            <person name="de la Bastide M."/>
            <person name="Spiegel L."/>
            <person name="Nascimento L."/>
            <person name="Huang E."/>
            <person name="Preston R."/>
            <person name="Zutavern T."/>
            <person name="Palmer L."/>
            <person name="O'Shaughnessy A."/>
            <person name="Dike S."/>
            <person name="McCombie W.R."/>
            <person name="Minx P."/>
            <person name="Cordum H."/>
            <person name="Wilson R."/>
            <person name="Jin W."/>
            <person name="Lee H.R."/>
            <person name="Jiang J."/>
            <person name="Jackson S."/>
        </authorList>
    </citation>
    <scope>NUCLEOTIDE SEQUENCE [LARGE SCALE GENOMIC DNA]</scope>
    <source>
        <strain>cv. Nipponbare</strain>
    </source>
</reference>
<reference key="3">
    <citation type="journal article" date="2005" name="Nature">
        <title>The map-based sequence of the rice genome.</title>
        <authorList>
            <consortium name="International rice genome sequencing project (IRGSP)"/>
        </authorList>
    </citation>
    <scope>NUCLEOTIDE SEQUENCE [LARGE SCALE GENOMIC DNA]</scope>
    <source>
        <strain>cv. Nipponbare</strain>
    </source>
</reference>
<reference key="4">
    <citation type="journal article" date="2008" name="Nucleic Acids Res.">
        <title>The rice annotation project database (RAP-DB): 2008 update.</title>
        <authorList>
            <consortium name="The rice annotation project (RAP)"/>
        </authorList>
    </citation>
    <scope>GENOME REANNOTATION</scope>
    <source>
        <strain>cv. Nipponbare</strain>
    </source>
</reference>
<reference key="5">
    <citation type="journal article" date="2013" name="Rice">
        <title>Improvement of the Oryza sativa Nipponbare reference genome using next generation sequence and optical map data.</title>
        <authorList>
            <person name="Kawahara Y."/>
            <person name="de la Bastide M."/>
            <person name="Hamilton J.P."/>
            <person name="Kanamori H."/>
            <person name="McCombie W.R."/>
            <person name="Ouyang S."/>
            <person name="Schwartz D.C."/>
            <person name="Tanaka T."/>
            <person name="Wu J."/>
            <person name="Zhou S."/>
            <person name="Childs K.L."/>
            <person name="Davidson R.M."/>
            <person name="Lin H."/>
            <person name="Quesada-Ocampo L."/>
            <person name="Vaillancourt B."/>
            <person name="Sakai H."/>
            <person name="Lee S.S."/>
            <person name="Kim J."/>
            <person name="Numa H."/>
            <person name="Itoh T."/>
            <person name="Buell C.R."/>
            <person name="Matsumoto T."/>
        </authorList>
    </citation>
    <scope>GENOME REANNOTATION</scope>
    <source>
        <strain>cv. Nipponbare</strain>
    </source>
</reference>
<reference key="6">
    <citation type="journal article" date="2005" name="PLoS Biol.">
        <title>The genomes of Oryza sativa: a history of duplications.</title>
        <authorList>
            <person name="Yu J."/>
            <person name="Wang J."/>
            <person name="Lin W."/>
            <person name="Li S."/>
            <person name="Li H."/>
            <person name="Zhou J."/>
            <person name="Ni P."/>
            <person name="Dong W."/>
            <person name="Hu S."/>
            <person name="Zeng C."/>
            <person name="Zhang J."/>
            <person name="Zhang Y."/>
            <person name="Li R."/>
            <person name="Xu Z."/>
            <person name="Li S."/>
            <person name="Li X."/>
            <person name="Zheng H."/>
            <person name="Cong L."/>
            <person name="Lin L."/>
            <person name="Yin J."/>
            <person name="Geng J."/>
            <person name="Li G."/>
            <person name="Shi J."/>
            <person name="Liu J."/>
            <person name="Lv H."/>
            <person name="Li J."/>
            <person name="Wang J."/>
            <person name="Deng Y."/>
            <person name="Ran L."/>
            <person name="Shi X."/>
            <person name="Wang X."/>
            <person name="Wu Q."/>
            <person name="Li C."/>
            <person name="Ren X."/>
            <person name="Wang J."/>
            <person name="Wang X."/>
            <person name="Li D."/>
            <person name="Liu D."/>
            <person name="Zhang X."/>
            <person name="Ji Z."/>
            <person name="Zhao W."/>
            <person name="Sun Y."/>
            <person name="Zhang Z."/>
            <person name="Bao J."/>
            <person name="Han Y."/>
            <person name="Dong L."/>
            <person name="Ji J."/>
            <person name="Chen P."/>
            <person name="Wu S."/>
            <person name="Liu J."/>
            <person name="Xiao Y."/>
            <person name="Bu D."/>
            <person name="Tan J."/>
            <person name="Yang L."/>
            <person name="Ye C."/>
            <person name="Zhang J."/>
            <person name="Xu J."/>
            <person name="Zhou Y."/>
            <person name="Yu Y."/>
            <person name="Zhang B."/>
            <person name="Zhuang S."/>
            <person name="Wei H."/>
            <person name="Liu B."/>
            <person name="Lei M."/>
            <person name="Yu H."/>
            <person name="Li Y."/>
            <person name="Xu H."/>
            <person name="Wei S."/>
            <person name="He X."/>
            <person name="Fang L."/>
            <person name="Zhang Z."/>
            <person name="Zhang Y."/>
            <person name="Huang X."/>
            <person name="Su Z."/>
            <person name="Tong W."/>
            <person name="Li J."/>
            <person name="Tong Z."/>
            <person name="Li S."/>
            <person name="Ye J."/>
            <person name="Wang L."/>
            <person name="Fang L."/>
            <person name="Lei T."/>
            <person name="Chen C.-S."/>
            <person name="Chen H.-C."/>
            <person name="Xu Z."/>
            <person name="Li H."/>
            <person name="Huang H."/>
            <person name="Zhang F."/>
            <person name="Xu H."/>
            <person name="Li N."/>
            <person name="Zhao C."/>
            <person name="Li S."/>
            <person name="Dong L."/>
            <person name="Huang Y."/>
            <person name="Li L."/>
            <person name="Xi Y."/>
            <person name="Qi Q."/>
            <person name="Li W."/>
            <person name="Zhang B."/>
            <person name="Hu W."/>
            <person name="Zhang Y."/>
            <person name="Tian X."/>
            <person name="Jiao Y."/>
            <person name="Liang X."/>
            <person name="Jin J."/>
            <person name="Gao L."/>
            <person name="Zheng W."/>
            <person name="Hao B."/>
            <person name="Liu S.-M."/>
            <person name="Wang W."/>
            <person name="Yuan L."/>
            <person name="Cao M."/>
            <person name="McDermott J."/>
            <person name="Samudrala R."/>
            <person name="Wang J."/>
            <person name="Wong G.K.-S."/>
            <person name="Yang H."/>
        </authorList>
    </citation>
    <scope>NUCLEOTIDE SEQUENCE [LARGE SCALE GENOMIC DNA]</scope>
    <source>
        <strain>cv. Nipponbare</strain>
    </source>
</reference>
<reference key="7">
    <citation type="journal article" date="2003" name="Science">
        <title>Collection, mapping, and annotation of over 28,000 cDNA clones from japonica rice.</title>
        <authorList>
            <consortium name="The rice full-length cDNA consortium"/>
        </authorList>
    </citation>
    <scope>NUCLEOTIDE SEQUENCE [LARGE SCALE MRNA]</scope>
    <source>
        <strain>cv. Nipponbare</strain>
    </source>
</reference>
<comment type="function">
    <text evidence="1">Forms a channel through the mitochondrial outer membrane that allows diffusion of small hydrophilic molecules. The channel adopts an open conformation at low or zero membrane potential and a closed conformation at potentials above 30-40 mV. The open state has a weak anion selectivity whereas the closed state is cation-selective (By similarity).</text>
</comment>
<comment type="subcellular location">
    <subcellularLocation>
        <location evidence="1">Mitochondrion outer membrane</location>
    </subcellularLocation>
</comment>
<comment type="domain">
    <text>Consists mainly of membrane-spanning sided beta-sheets.</text>
</comment>
<comment type="similarity">
    <text evidence="2">Belongs to the eukaryotic mitochondrial porin (TC 1.B.8.1) family.</text>
</comment>
<comment type="sequence caution" evidence="2">
    <conflict type="erroneous gene model prediction">
        <sequence resource="EMBL-CDS" id="ABF94514"/>
    </conflict>
</comment>
<accession>Q84P97</accession>
<accession>A0A0P0VUF2</accession>
<accession>Q10QB6</accession>
<keyword id="KW-0406">Ion transport</keyword>
<keyword id="KW-0472">Membrane</keyword>
<keyword id="KW-0496">Mitochondrion</keyword>
<keyword id="KW-1000">Mitochondrion outer membrane</keyword>
<keyword id="KW-0626">Porin</keyword>
<keyword id="KW-1185">Reference proteome</keyword>
<keyword id="KW-0812">Transmembrane</keyword>
<keyword id="KW-1134">Transmembrane beta strand</keyword>
<keyword id="KW-0813">Transport</keyword>
<evidence type="ECO:0000250" key="1"/>
<evidence type="ECO:0000305" key="2"/>